<geneLocation type="chloroplast"/>
<evidence type="ECO:0000255" key="1">
    <source>
        <dbReference type="HAMAP-Rule" id="MF_00439"/>
    </source>
</evidence>
<name>YCF3_SOLLC</name>
<sequence>MPRSRINGNFIDKTFSIVADILLRVIPTTSGEKEAFTYYRDGMSAQSEGNYAEALQNYYEAMRLEIDPYDRSYILYNIGLIHTSNGEHTKALEYYFRALERNPFLPQAFNNMAVICHYRGEQAIQQGDSEIAEAWFDQAAEYWKQAIALTPGNYIEARNWLKITRRFE</sequence>
<comment type="function">
    <text evidence="1">Essential for the assembly of the photosystem I (PSI) complex. May act as a chaperone-like factor to guide the assembly of the PSI subunits.</text>
</comment>
<comment type="subcellular location">
    <subcellularLocation>
        <location evidence="1">Plastid</location>
        <location evidence="1">Chloroplast thylakoid membrane</location>
        <topology evidence="1">Peripheral membrane protein</topology>
    </subcellularLocation>
</comment>
<comment type="similarity">
    <text evidence="1">Belongs to the Ycf3 family.</text>
</comment>
<organism>
    <name type="scientific">Solanum lycopersicum</name>
    <name type="common">Tomato</name>
    <name type="synonym">Lycopersicon esculentum</name>
    <dbReference type="NCBI Taxonomy" id="4081"/>
    <lineage>
        <taxon>Eukaryota</taxon>
        <taxon>Viridiplantae</taxon>
        <taxon>Streptophyta</taxon>
        <taxon>Embryophyta</taxon>
        <taxon>Tracheophyta</taxon>
        <taxon>Spermatophyta</taxon>
        <taxon>Magnoliopsida</taxon>
        <taxon>eudicotyledons</taxon>
        <taxon>Gunneridae</taxon>
        <taxon>Pentapetalae</taxon>
        <taxon>asterids</taxon>
        <taxon>lamiids</taxon>
        <taxon>Solanales</taxon>
        <taxon>Solanaceae</taxon>
        <taxon>Solanoideae</taxon>
        <taxon>Solaneae</taxon>
        <taxon>Solanum</taxon>
        <taxon>Solanum subgen. Lycopersicon</taxon>
    </lineage>
</organism>
<dbReference type="EMBL" id="DQ347959">
    <property type="protein sequence ID" value="ABC56301.1"/>
    <property type="molecule type" value="Genomic_DNA"/>
</dbReference>
<dbReference type="EMBL" id="AM087200">
    <property type="protein sequence ID" value="CAJ32394.1"/>
    <property type="molecule type" value="Genomic_DNA"/>
</dbReference>
<dbReference type="RefSeq" id="AP_004929.1">
    <property type="nucleotide sequence ID" value="AC_000188.1"/>
</dbReference>
<dbReference type="RefSeq" id="YP_008563089.1">
    <property type="nucleotide sequence ID" value="NC_007898.3"/>
</dbReference>
<dbReference type="SMR" id="Q2MI99"/>
<dbReference type="FunCoup" id="Q2MI99">
    <property type="interactions" value="26"/>
</dbReference>
<dbReference type="STRING" id="4081.Q2MI99"/>
<dbReference type="GeneID" id="3950429"/>
<dbReference type="KEGG" id="sly:3950429"/>
<dbReference type="eggNOG" id="KOG1124">
    <property type="taxonomic scope" value="Eukaryota"/>
</dbReference>
<dbReference type="InParanoid" id="Q2MI99"/>
<dbReference type="OrthoDB" id="431027at2759"/>
<dbReference type="Proteomes" id="UP000004994">
    <property type="component" value="Chloroplast"/>
</dbReference>
<dbReference type="ExpressionAtlas" id="Q2MI99">
    <property type="expression patterns" value="baseline"/>
</dbReference>
<dbReference type="GO" id="GO:0009535">
    <property type="term" value="C:chloroplast thylakoid membrane"/>
    <property type="evidence" value="ECO:0007669"/>
    <property type="project" value="UniProtKB-SubCell"/>
</dbReference>
<dbReference type="GO" id="GO:0048564">
    <property type="term" value="P:photosystem I assembly"/>
    <property type="evidence" value="ECO:0000318"/>
    <property type="project" value="GO_Central"/>
</dbReference>
<dbReference type="FunFam" id="1.25.40.10:FF:000004">
    <property type="entry name" value="Photosystem I assembly protein Ycf3"/>
    <property type="match status" value="1"/>
</dbReference>
<dbReference type="Gene3D" id="1.25.40.10">
    <property type="entry name" value="Tetratricopeptide repeat domain"/>
    <property type="match status" value="1"/>
</dbReference>
<dbReference type="HAMAP" id="MF_00439">
    <property type="entry name" value="Ycf3"/>
    <property type="match status" value="1"/>
</dbReference>
<dbReference type="InterPro" id="IPR022818">
    <property type="entry name" value="PSI_Ycf3_assembly"/>
</dbReference>
<dbReference type="InterPro" id="IPR011990">
    <property type="entry name" value="TPR-like_helical_dom_sf"/>
</dbReference>
<dbReference type="InterPro" id="IPR019734">
    <property type="entry name" value="TPR_rpt"/>
</dbReference>
<dbReference type="InterPro" id="IPR051685">
    <property type="entry name" value="Ycf3/AcsC/BcsC/TPR_MFPF"/>
</dbReference>
<dbReference type="NCBIfam" id="NF002725">
    <property type="entry name" value="PRK02603.1"/>
    <property type="match status" value="1"/>
</dbReference>
<dbReference type="PANTHER" id="PTHR44943">
    <property type="entry name" value="CELLULOSE SYNTHASE OPERON PROTEIN C"/>
    <property type="match status" value="1"/>
</dbReference>
<dbReference type="PANTHER" id="PTHR44943:SF8">
    <property type="entry name" value="TPR REPEAT-CONTAINING PROTEIN MJ0263"/>
    <property type="match status" value="1"/>
</dbReference>
<dbReference type="Pfam" id="PF00515">
    <property type="entry name" value="TPR_1"/>
    <property type="match status" value="1"/>
</dbReference>
<dbReference type="SMART" id="SM00028">
    <property type="entry name" value="TPR"/>
    <property type="match status" value="3"/>
</dbReference>
<dbReference type="SUPFAM" id="SSF48452">
    <property type="entry name" value="TPR-like"/>
    <property type="match status" value="1"/>
</dbReference>
<dbReference type="PROSITE" id="PS50005">
    <property type="entry name" value="TPR"/>
    <property type="match status" value="3"/>
</dbReference>
<dbReference type="PROSITE" id="PS50293">
    <property type="entry name" value="TPR_REGION"/>
    <property type="match status" value="2"/>
</dbReference>
<accession>Q2MI99</accession>
<keyword id="KW-0150">Chloroplast</keyword>
<keyword id="KW-0472">Membrane</keyword>
<keyword id="KW-0602">Photosynthesis</keyword>
<keyword id="KW-0934">Plastid</keyword>
<keyword id="KW-1185">Reference proteome</keyword>
<keyword id="KW-0677">Repeat</keyword>
<keyword id="KW-0793">Thylakoid</keyword>
<keyword id="KW-0802">TPR repeat</keyword>
<protein>
    <recommendedName>
        <fullName evidence="1">Photosystem I assembly protein Ycf3</fullName>
    </recommendedName>
</protein>
<proteinExistence type="inferred from homology"/>
<gene>
    <name evidence="1" type="primary">ycf3</name>
</gene>
<feature type="chain" id="PRO_0000275637" description="Photosystem I assembly protein Ycf3">
    <location>
        <begin position="1"/>
        <end position="168"/>
    </location>
</feature>
<feature type="repeat" description="TPR 1">
    <location>
        <begin position="35"/>
        <end position="68"/>
    </location>
</feature>
<feature type="repeat" description="TPR 2">
    <location>
        <begin position="72"/>
        <end position="105"/>
    </location>
</feature>
<feature type="repeat" description="TPR 3">
    <location>
        <begin position="120"/>
        <end position="153"/>
    </location>
</feature>
<reference key="1">
    <citation type="journal article" date="2006" name="Theor. Appl. Genet.">
        <title>Complete chloroplast genome sequences of Solanum bulbocastanum, Solanum lycopersicum and comparative analyses with other Solanaceae genomes.</title>
        <authorList>
            <person name="Daniell H."/>
            <person name="Lee S.-B."/>
            <person name="Grevich J."/>
            <person name="Saski C."/>
            <person name="Quesada-Vargas T."/>
            <person name="Guda C."/>
            <person name="Tomkins J."/>
            <person name="Jansen R.K."/>
        </authorList>
    </citation>
    <scope>NUCLEOTIDE SEQUENCE [LARGE SCALE GENOMIC DNA]</scope>
    <source>
        <strain>cv. LA3023</strain>
    </source>
</reference>
<reference key="2">
    <citation type="journal article" date="2006" name="J. Mol. Evol.">
        <title>Sequence of the tomato chloroplast DNA and evolutionary comparison of solanaceous plastid genomes.</title>
        <authorList>
            <person name="Kahlau S."/>
            <person name="Aspinall S."/>
            <person name="Gray J.C."/>
            <person name="Bock R."/>
        </authorList>
    </citation>
    <scope>NUCLEOTIDE SEQUENCE [LARGE SCALE GENOMIC DNA]</scope>
    <source>
        <strain>cv. IPA-6</strain>
    </source>
</reference>